<proteinExistence type="evidence at protein level"/>
<gene>
    <name evidence="1" type="primary">vapC10</name>
    <name type="ordered locus">Rv1397c</name>
</gene>
<organism>
    <name type="scientific">Mycobacterium tuberculosis (strain ATCC 25618 / H37Rv)</name>
    <dbReference type="NCBI Taxonomy" id="83332"/>
    <lineage>
        <taxon>Bacteria</taxon>
        <taxon>Bacillati</taxon>
        <taxon>Actinomycetota</taxon>
        <taxon>Actinomycetes</taxon>
        <taxon>Mycobacteriales</taxon>
        <taxon>Mycobacteriaceae</taxon>
        <taxon>Mycobacterium</taxon>
        <taxon>Mycobacterium tuberculosis complex</taxon>
    </lineage>
</organism>
<feature type="chain" id="PRO_0000407872" description="Ribonuclease VapC10">
    <location>
        <begin position="1"/>
        <end position="133"/>
    </location>
</feature>
<feature type="domain" description="PINc" evidence="1">
    <location>
        <begin position="2"/>
        <end position="119"/>
    </location>
</feature>
<feature type="binding site" evidence="1">
    <location>
        <position position="5"/>
    </location>
    <ligand>
        <name>Mg(2+)</name>
        <dbReference type="ChEBI" id="CHEBI:18420"/>
    </ligand>
</feature>
<feature type="binding site" evidence="1">
    <location>
        <position position="92"/>
    </location>
    <ligand>
        <name>Mg(2+)</name>
        <dbReference type="ChEBI" id="CHEBI:18420"/>
    </ligand>
</feature>
<keyword id="KW-0378">Hydrolase</keyword>
<keyword id="KW-0460">Magnesium</keyword>
<keyword id="KW-0479">Metal-binding</keyword>
<keyword id="KW-0540">Nuclease</keyword>
<keyword id="KW-1185">Reference proteome</keyword>
<keyword id="KW-1277">Toxin-antitoxin system</keyword>
<dbReference type="EC" id="3.1.-.-" evidence="1"/>
<dbReference type="EMBL" id="AL123456">
    <property type="protein sequence ID" value="CCP44156.1"/>
    <property type="molecule type" value="Genomic_DNA"/>
</dbReference>
<dbReference type="PIR" id="B70900">
    <property type="entry name" value="B70900"/>
</dbReference>
<dbReference type="RefSeq" id="NP_215913.1">
    <property type="nucleotide sequence ID" value="NC_000962.3"/>
</dbReference>
<dbReference type="RefSeq" id="WP_003898861.1">
    <property type="nucleotide sequence ID" value="NZ_NVQJ01000038.1"/>
</dbReference>
<dbReference type="SMR" id="P9WFA7"/>
<dbReference type="STRING" id="83332.Rv1397c"/>
<dbReference type="PaxDb" id="83332-Rv1397c"/>
<dbReference type="GeneID" id="886736"/>
<dbReference type="KEGG" id="mtu:Rv1397c"/>
<dbReference type="KEGG" id="mtv:RVBD_1397c"/>
<dbReference type="TubercuList" id="Rv1397c"/>
<dbReference type="eggNOG" id="COG1487">
    <property type="taxonomic scope" value="Bacteria"/>
</dbReference>
<dbReference type="InParanoid" id="P9WFA7"/>
<dbReference type="OrthoDB" id="532510at2"/>
<dbReference type="PhylomeDB" id="P9WFA7"/>
<dbReference type="Proteomes" id="UP000001584">
    <property type="component" value="Chromosome"/>
</dbReference>
<dbReference type="GO" id="GO:0005886">
    <property type="term" value="C:plasma membrane"/>
    <property type="evidence" value="ECO:0007005"/>
    <property type="project" value="MTBBASE"/>
</dbReference>
<dbReference type="GO" id="GO:0000287">
    <property type="term" value="F:magnesium ion binding"/>
    <property type="evidence" value="ECO:0007669"/>
    <property type="project" value="UniProtKB-UniRule"/>
</dbReference>
<dbReference type="GO" id="GO:0004521">
    <property type="term" value="F:RNA endonuclease activity"/>
    <property type="evidence" value="ECO:0000318"/>
    <property type="project" value="GO_Central"/>
</dbReference>
<dbReference type="CDD" id="cd18741">
    <property type="entry name" value="PIN_VapC4-5_FitB-like"/>
    <property type="match status" value="1"/>
</dbReference>
<dbReference type="FunFam" id="3.40.50.1010:FF:000070">
    <property type="entry name" value="Ribonuclease VapC"/>
    <property type="match status" value="1"/>
</dbReference>
<dbReference type="Gene3D" id="3.40.50.1010">
    <property type="entry name" value="5'-nuclease"/>
    <property type="match status" value="1"/>
</dbReference>
<dbReference type="HAMAP" id="MF_00265">
    <property type="entry name" value="VapC_Nob1"/>
    <property type="match status" value="1"/>
</dbReference>
<dbReference type="InterPro" id="IPR029060">
    <property type="entry name" value="PIN-like_dom_sf"/>
</dbReference>
<dbReference type="InterPro" id="IPR002716">
    <property type="entry name" value="PIN_dom"/>
</dbReference>
<dbReference type="InterPro" id="IPR050556">
    <property type="entry name" value="Type_II_TA_system_RNase"/>
</dbReference>
<dbReference type="InterPro" id="IPR022907">
    <property type="entry name" value="VapC_family"/>
</dbReference>
<dbReference type="PANTHER" id="PTHR33653">
    <property type="entry name" value="RIBONUCLEASE VAPC2"/>
    <property type="match status" value="1"/>
</dbReference>
<dbReference type="PANTHER" id="PTHR33653:SF1">
    <property type="entry name" value="RIBONUCLEASE VAPC2"/>
    <property type="match status" value="1"/>
</dbReference>
<dbReference type="Pfam" id="PF01850">
    <property type="entry name" value="PIN"/>
    <property type="match status" value="1"/>
</dbReference>
<dbReference type="SUPFAM" id="SSF88723">
    <property type="entry name" value="PIN domain-like"/>
    <property type="match status" value="1"/>
</dbReference>
<name>VPC10_MYCTU</name>
<sequence>MILVDSDVLIAHLRGVVAARDWLVSARKDGPLAISVVSTAELIGGMRTAERREVWRLLASFRVQPATEVIARRAGDMMRRYRRSHNRIGLGDYLIAATADVQDLQLATLNVWHFPMFEQLKPPFAVPGHRPRA</sequence>
<comment type="function">
    <text evidence="1">Toxic component of a type II toxin-antitoxin (TA) system. An RNase. The cognate antitoxin is VapB10 (By similarity).</text>
</comment>
<comment type="cofactor">
    <cofactor evidence="1">
        <name>Mg(2+)</name>
        <dbReference type="ChEBI" id="CHEBI:18420"/>
    </cofactor>
</comment>
<comment type="similarity">
    <text evidence="1">Belongs to the PINc/VapC protein family.</text>
</comment>
<reference key="1">
    <citation type="journal article" date="1998" name="Nature">
        <title>Deciphering the biology of Mycobacterium tuberculosis from the complete genome sequence.</title>
        <authorList>
            <person name="Cole S.T."/>
            <person name="Brosch R."/>
            <person name="Parkhill J."/>
            <person name="Garnier T."/>
            <person name="Churcher C.M."/>
            <person name="Harris D.E."/>
            <person name="Gordon S.V."/>
            <person name="Eiglmeier K."/>
            <person name="Gas S."/>
            <person name="Barry C.E. III"/>
            <person name="Tekaia F."/>
            <person name="Badcock K."/>
            <person name="Basham D."/>
            <person name="Brown D."/>
            <person name="Chillingworth T."/>
            <person name="Connor R."/>
            <person name="Davies R.M."/>
            <person name="Devlin K."/>
            <person name="Feltwell T."/>
            <person name="Gentles S."/>
            <person name="Hamlin N."/>
            <person name="Holroyd S."/>
            <person name="Hornsby T."/>
            <person name="Jagels K."/>
            <person name="Krogh A."/>
            <person name="McLean J."/>
            <person name="Moule S."/>
            <person name="Murphy L.D."/>
            <person name="Oliver S."/>
            <person name="Osborne J."/>
            <person name="Quail M.A."/>
            <person name="Rajandream M.A."/>
            <person name="Rogers J."/>
            <person name="Rutter S."/>
            <person name="Seeger K."/>
            <person name="Skelton S."/>
            <person name="Squares S."/>
            <person name="Squares R."/>
            <person name="Sulston J.E."/>
            <person name="Taylor K."/>
            <person name="Whitehead S."/>
            <person name="Barrell B.G."/>
        </authorList>
    </citation>
    <scope>NUCLEOTIDE SEQUENCE [LARGE SCALE GENOMIC DNA]</scope>
    <source>
        <strain>ATCC 25618 / H37Rv</strain>
    </source>
</reference>
<reference key="2">
    <citation type="journal article" date="2005" name="Nucleic Acids Res.">
        <title>Toxin-antitoxin loci are highly abundant in free-living but lost from host-associated prokaryotes.</title>
        <authorList>
            <person name="Pandey D.P."/>
            <person name="Gerdes K."/>
        </authorList>
    </citation>
    <scope>POSSIBLE FUNCTION</scope>
    <source>
        <strain>ATCC 25618 / H37Rv</strain>
    </source>
</reference>
<reference key="3">
    <citation type="journal article" date="2011" name="Mol. Cell. Proteomics">
        <title>Proteogenomic analysis of Mycobacterium tuberculosis by high resolution mass spectrometry.</title>
        <authorList>
            <person name="Kelkar D.S."/>
            <person name="Kumar D."/>
            <person name="Kumar P."/>
            <person name="Balakrishnan L."/>
            <person name="Muthusamy B."/>
            <person name="Yadav A.K."/>
            <person name="Shrivastava P."/>
            <person name="Marimuthu A."/>
            <person name="Anand S."/>
            <person name="Sundaram H."/>
            <person name="Kingsbury R."/>
            <person name="Harsha H.C."/>
            <person name="Nair B."/>
            <person name="Prasad T.S."/>
            <person name="Chauhan D.S."/>
            <person name="Katoch K."/>
            <person name="Katoch V.M."/>
            <person name="Kumar P."/>
            <person name="Chaerkady R."/>
            <person name="Ramachandran S."/>
            <person name="Dash D."/>
            <person name="Pandey A."/>
        </authorList>
    </citation>
    <scope>IDENTIFICATION BY MASS SPECTROMETRY [LARGE SCALE ANALYSIS]</scope>
    <source>
        <strain>ATCC 25618 / H37Rv</strain>
    </source>
</reference>
<accession>P9WFA7</accession>
<accession>L0T6J0</accession>
<accession>P71665</accession>
<accession>Q7D8H3</accession>
<protein>
    <recommendedName>
        <fullName evidence="1">Ribonuclease VapC10</fullName>
        <shortName evidence="1">RNase VapC10</shortName>
        <ecNumber evidence="1">3.1.-.-</ecNumber>
    </recommendedName>
    <alternativeName>
        <fullName evidence="1">Toxin VapC10</fullName>
    </alternativeName>
</protein>
<evidence type="ECO:0000255" key="1">
    <source>
        <dbReference type="HAMAP-Rule" id="MF_00265"/>
    </source>
</evidence>